<evidence type="ECO:0000250" key="1"/>
<evidence type="ECO:0000305" key="2"/>
<reference key="1">
    <citation type="submission" date="1999-12" db="EMBL/GenBank/DDBJ databases">
        <title>Candida albicans eIF4E gene.</title>
        <authorList>
            <person name="Ono N."/>
            <person name="Sudoh M."/>
        </authorList>
    </citation>
    <scope>NUCLEOTIDE SEQUENCE [GENOMIC DNA]</scope>
    <source>
        <strain>SC5314 / CAI4 / ATCC MYA-682</strain>
    </source>
</reference>
<reference key="2">
    <citation type="journal article" date="2004" name="Proc. Natl. Acad. Sci. U.S.A.">
        <title>The diploid genome sequence of Candida albicans.</title>
        <authorList>
            <person name="Jones T."/>
            <person name="Federspiel N.A."/>
            <person name="Chibana H."/>
            <person name="Dungan J."/>
            <person name="Kalman S."/>
            <person name="Magee B.B."/>
            <person name="Newport G."/>
            <person name="Thorstenson Y.R."/>
            <person name="Agabian N."/>
            <person name="Magee P.T."/>
            <person name="Davis R.W."/>
            <person name="Scherer S."/>
        </authorList>
    </citation>
    <scope>NUCLEOTIDE SEQUENCE [LARGE SCALE GENOMIC DNA]</scope>
    <source>
        <strain>SC5314 / ATCC MYA-2876</strain>
    </source>
</reference>
<reference key="3">
    <citation type="journal article" date="2007" name="Genome Biol.">
        <title>Assembly of the Candida albicans genome into sixteen supercontigs aligned on the eight chromosomes.</title>
        <authorList>
            <person name="van het Hoog M."/>
            <person name="Rast T.J."/>
            <person name="Martchenko M."/>
            <person name="Grindle S."/>
            <person name="Dignard D."/>
            <person name="Hogues H."/>
            <person name="Cuomo C."/>
            <person name="Berriman M."/>
            <person name="Scherer S."/>
            <person name="Magee B.B."/>
            <person name="Whiteway M."/>
            <person name="Chibana H."/>
            <person name="Nantel A."/>
            <person name="Magee P.T."/>
        </authorList>
    </citation>
    <scope>GENOME REANNOTATION</scope>
    <source>
        <strain>SC5314 / ATCC MYA-2876</strain>
    </source>
</reference>
<reference key="4">
    <citation type="journal article" date="2013" name="Genome Biol.">
        <title>Assembly of a phased diploid Candida albicans genome facilitates allele-specific measurements and provides a simple model for repeat and indel structure.</title>
        <authorList>
            <person name="Muzzey D."/>
            <person name="Schwartz K."/>
            <person name="Weissman J.S."/>
            <person name="Sherlock G."/>
        </authorList>
    </citation>
    <scope>NUCLEOTIDE SEQUENCE [LARGE SCALE GENOMIC DNA]</scope>
    <scope>GENOME REANNOTATION</scope>
    <source>
        <strain>SC5314 / ATCC MYA-2876</strain>
    </source>
</reference>
<protein>
    <recommendedName>
        <fullName>Eukaryotic translation initiation factor 4E</fullName>
        <shortName>eIF-4E</shortName>
        <shortName>eIF4E</shortName>
    </recommendedName>
    <alternativeName>
        <fullName>eIF-4F 25 kDa subunit</fullName>
    </alternativeName>
    <alternativeName>
        <fullName>mRNA cap-binding protein</fullName>
    </alternativeName>
</protein>
<feature type="chain" id="PRO_0000193649" description="Eukaryotic translation initiation factor 4E">
    <location>
        <begin position="1"/>
        <end position="209"/>
    </location>
</feature>
<feature type="binding site" evidence="1">
    <location>
        <begin position="51"/>
        <end position="52"/>
    </location>
    <ligand>
        <name>mRNA</name>
        <dbReference type="ChEBI" id="CHEBI:33699"/>
    </ligand>
    <ligandPart>
        <name>N(7)-methylguanosine 5'-triphosphate group</name>
        <dbReference type="ChEBI" id="CHEBI:74429"/>
        <note>m7GTP residue in mRNA cap</note>
    </ligandPart>
</feature>
<feature type="binding site" evidence="1">
    <location>
        <begin position="97"/>
        <end position="98"/>
    </location>
    <ligand>
        <name>mRNA</name>
        <dbReference type="ChEBI" id="CHEBI:33699"/>
    </ligand>
    <ligandPart>
        <name>N(7)-methylguanosine 5'-triphosphate group</name>
        <dbReference type="ChEBI" id="CHEBI:74429"/>
        <note>m7GTP residue in mRNA cap</note>
    </ligandPart>
</feature>
<feature type="binding site" evidence="1">
    <location>
        <begin position="153"/>
        <end position="158"/>
    </location>
    <ligand>
        <name>mRNA</name>
        <dbReference type="ChEBI" id="CHEBI:33699"/>
    </ligand>
    <ligandPart>
        <name>N(7)-methylguanosine 5'-triphosphate group</name>
        <dbReference type="ChEBI" id="CHEBI:74429"/>
        <note>m7GTP residue in mRNA cap</note>
    </ligandPart>
</feature>
<gene>
    <name type="primary">TIF45</name>
    <name type="synonym">EIF4E</name>
    <name type="ordered locus">CAALFM_CR10490WA</name>
    <name type="ORF">CaO19.7626</name>
</gene>
<organism>
    <name type="scientific">Candida albicans (strain SC5314 / ATCC MYA-2876)</name>
    <name type="common">Yeast</name>
    <dbReference type="NCBI Taxonomy" id="237561"/>
    <lineage>
        <taxon>Eukaryota</taxon>
        <taxon>Fungi</taxon>
        <taxon>Dikarya</taxon>
        <taxon>Ascomycota</taxon>
        <taxon>Saccharomycotina</taxon>
        <taxon>Pichiomycetes</taxon>
        <taxon>Debaryomycetaceae</taxon>
        <taxon>Candida/Lodderomyces clade</taxon>
        <taxon>Candida</taxon>
    </lineage>
</organism>
<keyword id="KW-0396">Initiation factor</keyword>
<keyword id="KW-0648">Protein biosynthesis</keyword>
<keyword id="KW-1185">Reference proteome</keyword>
<keyword id="KW-0694">RNA-binding</keyword>
<keyword id="KW-0810">Translation regulation</keyword>
<comment type="function">
    <text evidence="1">Recognizes and binds the 7-methylguanosine-containing mRNA cap during an early step in the initiation of protein synthesis and facilitates ribosome binding by inducing the unwinding of the mRNAs secondary structures.</text>
</comment>
<comment type="subunit">
    <text evidence="1">eIF4F is a multi-subunit complex, the composition of which varies with external and internal environmental conditions. It is composed of at least eIF4A, eIF4E and eIF4G. eIF4E is also known to interact with other partners (By similarity).</text>
</comment>
<comment type="similarity">
    <text evidence="2">Belongs to the eukaryotic initiation factor 4E family.</text>
</comment>
<accession>Q9P975</accession>
<accession>A0A1D8PU76</accession>
<accession>Q5ACL6</accession>
<dbReference type="EMBL" id="AB036332">
    <property type="protein sequence ID" value="BAA93570.1"/>
    <property type="molecule type" value="Genomic_DNA"/>
</dbReference>
<dbReference type="EMBL" id="CP017630">
    <property type="protein sequence ID" value="AOW31698.1"/>
    <property type="molecule type" value="Genomic_DNA"/>
</dbReference>
<dbReference type="RefSeq" id="XP_719387.1">
    <property type="nucleotide sequence ID" value="XM_714294.1"/>
</dbReference>
<dbReference type="SMR" id="Q9P975"/>
<dbReference type="FunCoup" id="Q9P975">
    <property type="interactions" value="1351"/>
</dbReference>
<dbReference type="STRING" id="237561.Q9P975"/>
<dbReference type="EnsemblFungi" id="CR_10490W_A-T">
    <property type="protein sequence ID" value="CR_10490W_A-T-p1"/>
    <property type="gene ID" value="CR_10490W_A"/>
</dbReference>
<dbReference type="GeneID" id="3638981"/>
<dbReference type="KEGG" id="cal:CAALFM_CR10490WA"/>
<dbReference type="CGD" id="CAL0000195194">
    <property type="gene designation" value="EIF4E"/>
</dbReference>
<dbReference type="VEuPathDB" id="FungiDB:CR_10490W_A"/>
<dbReference type="eggNOG" id="KOG1670">
    <property type="taxonomic scope" value="Eukaryota"/>
</dbReference>
<dbReference type="HOGENOM" id="CLU_043552_2_2_1"/>
<dbReference type="InParanoid" id="Q9P975"/>
<dbReference type="OMA" id="VKPRICL"/>
<dbReference type="OrthoDB" id="590761at2759"/>
<dbReference type="Proteomes" id="UP000000559">
    <property type="component" value="Chromosome R"/>
</dbReference>
<dbReference type="GO" id="GO:0010494">
    <property type="term" value="C:cytoplasmic stress granule"/>
    <property type="evidence" value="ECO:0007669"/>
    <property type="project" value="EnsemblFungi"/>
</dbReference>
<dbReference type="GO" id="GO:0016281">
    <property type="term" value="C:eukaryotic translation initiation factor 4F complex"/>
    <property type="evidence" value="ECO:0000318"/>
    <property type="project" value="GO_Central"/>
</dbReference>
<dbReference type="GO" id="GO:0005634">
    <property type="term" value="C:nucleus"/>
    <property type="evidence" value="ECO:0007669"/>
    <property type="project" value="EnsemblFungi"/>
</dbReference>
<dbReference type="GO" id="GO:0098808">
    <property type="term" value="F:mRNA cap binding"/>
    <property type="evidence" value="ECO:0007669"/>
    <property type="project" value="EnsemblFungi"/>
</dbReference>
<dbReference type="GO" id="GO:0032266">
    <property type="term" value="F:phosphatidylinositol-3-phosphate binding"/>
    <property type="evidence" value="ECO:0007669"/>
    <property type="project" value="EnsemblFungi"/>
</dbReference>
<dbReference type="GO" id="GO:0000340">
    <property type="term" value="F:RNA 7-methylguanosine cap binding"/>
    <property type="evidence" value="ECO:0000318"/>
    <property type="project" value="GO_Central"/>
</dbReference>
<dbReference type="GO" id="GO:0003743">
    <property type="term" value="F:translation initiation factor activity"/>
    <property type="evidence" value="ECO:0000316"/>
    <property type="project" value="CGD"/>
</dbReference>
<dbReference type="GO" id="GO:0000184">
    <property type="term" value="P:nuclear-transcribed mRNA catabolic process, nonsense-mediated decay"/>
    <property type="evidence" value="ECO:0007669"/>
    <property type="project" value="EnsemblFungi"/>
</dbReference>
<dbReference type="GO" id="GO:1901195">
    <property type="term" value="P:positive regulation of formation of translation preinitiation complex"/>
    <property type="evidence" value="ECO:0007669"/>
    <property type="project" value="EnsemblFungi"/>
</dbReference>
<dbReference type="GO" id="GO:0051726">
    <property type="term" value="P:regulation of cell cycle"/>
    <property type="evidence" value="ECO:0007669"/>
    <property type="project" value="EnsemblFungi"/>
</dbReference>
<dbReference type="GO" id="GO:0006413">
    <property type="term" value="P:translational initiation"/>
    <property type="evidence" value="ECO:0000316"/>
    <property type="project" value="CGD"/>
</dbReference>
<dbReference type="FunFam" id="3.30.760.10:FF:000011">
    <property type="entry name" value="Eukaryotic translation initiation factor 4E"/>
    <property type="match status" value="1"/>
</dbReference>
<dbReference type="Gene3D" id="3.30.760.10">
    <property type="entry name" value="RNA Cap, Translation Initiation Factor Eif4e"/>
    <property type="match status" value="1"/>
</dbReference>
<dbReference type="InterPro" id="IPR023398">
    <property type="entry name" value="TIF_eIF4e-like"/>
</dbReference>
<dbReference type="InterPro" id="IPR001040">
    <property type="entry name" value="TIF_eIF_4E"/>
</dbReference>
<dbReference type="InterPro" id="IPR019770">
    <property type="entry name" value="TIF_eIF_4E_CS"/>
</dbReference>
<dbReference type="PANTHER" id="PTHR11960">
    <property type="entry name" value="EUKARYOTIC TRANSLATION INITIATION FACTOR 4E RELATED"/>
    <property type="match status" value="1"/>
</dbReference>
<dbReference type="PANTHER" id="PTHR11960:SF8">
    <property type="entry name" value="EUKARYOTIC TRANSLATION INITIATION FACTOR 4E1-RELATED"/>
    <property type="match status" value="1"/>
</dbReference>
<dbReference type="Pfam" id="PF01652">
    <property type="entry name" value="IF4E"/>
    <property type="match status" value="1"/>
</dbReference>
<dbReference type="SUPFAM" id="SSF55418">
    <property type="entry name" value="eIF4e-like"/>
    <property type="match status" value="1"/>
</dbReference>
<dbReference type="PROSITE" id="PS00813">
    <property type="entry name" value="IF4E"/>
    <property type="match status" value="1"/>
</dbReference>
<sequence>MSEELAQKTEELSLDSKTVFDSKEEFNAKHPLNSRWTLWYTKPQTNKSENWHDLLKPVITFSSVEEFWGIYNSIPPANQLPLKSDYHLFKEGIRPEWEDEANSKGGKWQFSFNKKSEVNPIINDLWLRGLLAVIGETIEDEENEVNGIVLNIRKQAYRVGIWTKDCDESKLKTVGERLKKVLQLNDEQKVEFMSHDASNTRGAEPQIVL</sequence>
<proteinExistence type="inferred from homology"/>
<name>IF4E_CANAL</name>